<keyword id="KW-0456">Lyase</keyword>
<keyword id="KW-1185">Reference proteome</keyword>
<proteinExistence type="evidence at protein level"/>
<organism>
    <name type="scientific">Aspergillus aculeatus (strain ATCC 16872 / CBS 172.66 / WB 5094)</name>
    <dbReference type="NCBI Taxonomy" id="690307"/>
    <lineage>
        <taxon>Eukaryota</taxon>
        <taxon>Fungi</taxon>
        <taxon>Dikarya</taxon>
        <taxon>Ascomycota</taxon>
        <taxon>Pezizomycotina</taxon>
        <taxon>Eurotiomycetes</taxon>
        <taxon>Eurotiomycetidae</taxon>
        <taxon>Eurotiales</taxon>
        <taxon>Aspergillaceae</taxon>
        <taxon>Aspergillus</taxon>
        <taxon>Aspergillus subgen. Circumdati</taxon>
    </lineage>
</organism>
<dbReference type="EC" id="4.2.1.-" evidence="5"/>
<dbReference type="EMBL" id="KV878984">
    <property type="protein sequence ID" value="OJJ97031.1"/>
    <property type="molecule type" value="Genomic_DNA"/>
</dbReference>
<dbReference type="RefSeq" id="XP_020053371.1">
    <property type="nucleotide sequence ID" value="XM_020202867.1"/>
</dbReference>
<dbReference type="SMR" id="A0A1L9WLL5"/>
<dbReference type="STRING" id="690307.A0A1L9WLL5"/>
<dbReference type="GeneID" id="30976681"/>
<dbReference type="VEuPathDB" id="FungiDB:ASPACDRAFT_54344"/>
<dbReference type="OMA" id="ARIKTQH"/>
<dbReference type="OrthoDB" id="5281072at2759"/>
<dbReference type="Proteomes" id="UP000184546">
    <property type="component" value="Unassembled WGS sequence"/>
</dbReference>
<dbReference type="GO" id="GO:0030411">
    <property type="term" value="F:scytalone dehydratase activity"/>
    <property type="evidence" value="ECO:0007669"/>
    <property type="project" value="InterPro"/>
</dbReference>
<dbReference type="GO" id="GO:0006582">
    <property type="term" value="P:melanin metabolic process"/>
    <property type="evidence" value="ECO:0007669"/>
    <property type="project" value="InterPro"/>
</dbReference>
<dbReference type="Gene3D" id="3.10.450.50">
    <property type="match status" value="1"/>
</dbReference>
<dbReference type="InterPro" id="IPR032710">
    <property type="entry name" value="NTF2-like_dom_sf"/>
</dbReference>
<dbReference type="InterPro" id="IPR004235">
    <property type="entry name" value="Scytalone_dehydratase"/>
</dbReference>
<dbReference type="InterPro" id="IPR049884">
    <property type="entry name" value="Scytalone_dh"/>
</dbReference>
<dbReference type="Pfam" id="PF02982">
    <property type="entry name" value="Scytalone_dh"/>
    <property type="match status" value="1"/>
</dbReference>
<dbReference type="PIRSF" id="PIRSF024851">
    <property type="entry name" value="SCD1"/>
    <property type="match status" value="1"/>
</dbReference>
<dbReference type="SUPFAM" id="SSF54427">
    <property type="entry name" value="NTF2-like"/>
    <property type="match status" value="1"/>
</dbReference>
<sequence>MAKPTAPCFEDVLGCQAALYEWAESYDTKDWDRLAQCIAPTLRIDYRAFLNKLWEEMPAPEFLLMASDLKFLGNRRLKTQHFVGGASKWLQTSEDEITGQHQMRVAHQKYADDALSEVALKGHAHGHATIWYRRVEGQWRFAGIEPGIRWSEYDHDRIFFEGEEKLGEPQSDECAC</sequence>
<accession>A0A1L9WLL5</accession>
<comment type="function">
    <text evidence="5 7 10">Scytalone dehydratase-like protein; part of the gene cluster that mediates the biosynthesis of the tetrahydroxanthone dimer secalonic acid D (PubMed:30996871, PubMed:33891392). The pathway begins with the synthesis of atrochrysone thioester by the polyketide synthase AacuL (Probable). The atrochrysone carboxyl ACP thioesterase AacuM then breaks the thioester bond and releases the atrochrysone carboxylic acid from AacuL (Probable). Atrochrysone carboxylic acid is decarboxylated by the decarboxylase AacuI, and oxidized by the anthrone oxygenase AacuG to yield emodin (Probable). Emodin is then reduced to emodin hydroquinone by a yet unidentified oxidoreductase (Probable). A-ring reduction by the short chain dehydrogenase AacuN, dehydration by the scytalone dehydratase-like protein AacuK and probable spontaneous re-oxidation, results in overall deoxygenation to chrysophanol (PubMed:33891392). Baeyer-Villiger oxidation by the Baeyer-Villiger monooxygenase (BVMO) AacuH then yields monodictyphenone (PubMed:33891392). Monodictyphenone is transformed into compounds with the tetrahydroxanthone skeleton via methylesterification by the methyltransferase AacuQ, followed by the action of the flavin-dependent monooxygenase AacuC, the isomerase AacuP, and the short chain dehydrogenase/reductase AacuF or AacuD (PubMed:33891392). AacuF and AacuD should accept the same compound as a substrate but perform the ketoreduction with a different stereoselectivity, thus yielding blennolides B and A, respectively (PubMed:33891392). In the final step of the biosynthesis, the cytochrome P450 monooxygenase AacuE accepts blennolide B and/or blennolide A to conduct the dimerization reaction to furnish the tetrahydroxanthone dimers, secalonic acids D, B, and F (PubMed:33891392).</text>
</comment>
<comment type="pathway">
    <text evidence="5">Secondary metabolite biosynthesis.</text>
</comment>
<comment type="biotechnology">
    <text evidence="2 3 4 6">Secalonic acids show unprecedented anticancer activities against various human cancer cells and might be interesting for further derivatization, targeting diseases such as cancer.</text>
</comment>
<comment type="similarity">
    <text evidence="9">Belongs to the scytalone dehydratase family.</text>
</comment>
<protein>
    <recommendedName>
        <fullName evidence="8">Scytalone dehydratase-like protein AacuK</fullName>
        <ecNumber evidence="5">4.2.1.-</ecNumber>
    </recommendedName>
    <alternativeName>
        <fullName evidence="8">Secalonic acid biosynthesis cluster protein K</fullName>
    </alternativeName>
</protein>
<gene>
    <name evidence="8" type="primary">AacuK</name>
    <name type="ORF">ASPACDRAFT_54344</name>
</gene>
<reference key="1">
    <citation type="journal article" date="2017" name="Genome Biol.">
        <title>Comparative genomics reveals high biological diversity and specific adaptations in the industrially and medically important fungal genus Aspergillus.</title>
        <authorList>
            <person name="de Vries R.P."/>
            <person name="Riley R."/>
            <person name="Wiebenga A."/>
            <person name="Aguilar-Osorio G."/>
            <person name="Amillis S."/>
            <person name="Uchima C.A."/>
            <person name="Anderluh G."/>
            <person name="Asadollahi M."/>
            <person name="Askin M."/>
            <person name="Barry K."/>
            <person name="Battaglia E."/>
            <person name="Bayram O."/>
            <person name="Benocci T."/>
            <person name="Braus-Stromeyer S.A."/>
            <person name="Caldana C."/>
            <person name="Canovas D."/>
            <person name="Cerqueira G.C."/>
            <person name="Chen F."/>
            <person name="Chen W."/>
            <person name="Choi C."/>
            <person name="Clum A."/>
            <person name="Dos Santos R.A."/>
            <person name="Damasio A.R."/>
            <person name="Diallinas G."/>
            <person name="Emri T."/>
            <person name="Fekete E."/>
            <person name="Flipphi M."/>
            <person name="Freyberg S."/>
            <person name="Gallo A."/>
            <person name="Gournas C."/>
            <person name="Habgood R."/>
            <person name="Hainaut M."/>
            <person name="Harispe M.L."/>
            <person name="Henrissat B."/>
            <person name="Hilden K.S."/>
            <person name="Hope R."/>
            <person name="Hossain A."/>
            <person name="Karabika E."/>
            <person name="Karaffa L."/>
            <person name="Karanyi Z."/>
            <person name="Krasevec N."/>
            <person name="Kuo A."/>
            <person name="Kusch H."/>
            <person name="LaButti K."/>
            <person name="Lagendijk E.L."/>
            <person name="Lapidus A."/>
            <person name="Levasseur A."/>
            <person name="Lindquist E."/>
            <person name="Lipzen A."/>
            <person name="Logrieco A.F."/>
            <person name="MacCabe A."/>
            <person name="Maekelae M.R."/>
            <person name="Malavazi I."/>
            <person name="Melin P."/>
            <person name="Meyer V."/>
            <person name="Mielnichuk N."/>
            <person name="Miskei M."/>
            <person name="Molnar A.P."/>
            <person name="Mule G."/>
            <person name="Ngan C.Y."/>
            <person name="Orejas M."/>
            <person name="Orosz E."/>
            <person name="Ouedraogo J.P."/>
            <person name="Overkamp K.M."/>
            <person name="Park H.-S."/>
            <person name="Perrone G."/>
            <person name="Piumi F."/>
            <person name="Punt P.J."/>
            <person name="Ram A.F."/>
            <person name="Ramon A."/>
            <person name="Rauscher S."/>
            <person name="Record E."/>
            <person name="Riano-Pachon D.M."/>
            <person name="Robert V."/>
            <person name="Roehrig J."/>
            <person name="Ruller R."/>
            <person name="Salamov A."/>
            <person name="Salih N.S."/>
            <person name="Samson R.A."/>
            <person name="Sandor E."/>
            <person name="Sanguinetti M."/>
            <person name="Schuetze T."/>
            <person name="Sepcic K."/>
            <person name="Shelest E."/>
            <person name="Sherlock G."/>
            <person name="Sophianopoulou V."/>
            <person name="Squina F.M."/>
            <person name="Sun H."/>
            <person name="Susca A."/>
            <person name="Todd R.B."/>
            <person name="Tsang A."/>
            <person name="Unkles S.E."/>
            <person name="van de Wiele N."/>
            <person name="van Rossen-Uffink D."/>
            <person name="Oliveira J.V."/>
            <person name="Vesth T.C."/>
            <person name="Visser J."/>
            <person name="Yu J.-H."/>
            <person name="Zhou M."/>
            <person name="Andersen M.R."/>
            <person name="Archer D.B."/>
            <person name="Baker S.E."/>
            <person name="Benoit I."/>
            <person name="Brakhage A.A."/>
            <person name="Braus G.H."/>
            <person name="Fischer R."/>
            <person name="Frisvad J.C."/>
            <person name="Goldman G.H."/>
            <person name="Houbraken J."/>
            <person name="Oakley B."/>
            <person name="Pocsi I."/>
            <person name="Scazzocchio C."/>
            <person name="Seiboth B."/>
            <person name="vanKuyk P.A."/>
            <person name="Wortman J."/>
            <person name="Dyer P.S."/>
            <person name="Grigoriev I.V."/>
        </authorList>
    </citation>
    <scope>NUCLEOTIDE SEQUENCE [LARGE SCALE GENOMIC DNA]</scope>
    <source>
        <strain>ATCC 16872 / CBS 172.66 / WB 5094</strain>
    </source>
</reference>
<reference key="2">
    <citation type="journal article" date="2017" name="Neoplasma">
        <title>Secalonic acid- F inhibited cell growth more effectively than 5-fluorouracil on hepatocellular carcinoma in vitro and in vivo.</title>
        <authorList>
            <person name="Gao X."/>
            <person name="Sun H.L."/>
            <person name="Liu D.S."/>
            <person name="Zhang J.R."/>
            <person name="Zhang J."/>
            <person name="Yan M.M."/>
            <person name="Pan X.H."/>
        </authorList>
    </citation>
    <scope>BIOTECHNOLOGY</scope>
</reference>
<reference key="3">
    <citation type="journal article" date="2018" name="Curr. Microbiol.">
        <title>Secondary Metabolites and Their Biological Activity from Aspergillus aculeatus KKU-CT2.</title>
        <authorList>
            <person name="Yodsing N."/>
            <person name="Lekphrom R."/>
            <person name="Sangsopha W."/>
            <person name="Aimi T."/>
            <person name="Boonlue S."/>
        </authorList>
    </citation>
    <scope>BIOTECHNOLOGY</scope>
</reference>
<reference key="4">
    <citation type="journal article" date="2019" name="Chem. Sci.">
        <title>Structure revision of cryptosporioptides and determination of the genetic basis for dimeric xanthone biosynthesis in fungi.</title>
        <authorList>
            <person name="Greco C."/>
            <person name="de Mattos-Shipley K."/>
            <person name="Bailey A.M."/>
            <person name="Mulholland N.P."/>
            <person name="Vincent J.L."/>
            <person name="Willis C.L."/>
            <person name="Cox R.J."/>
            <person name="Simpson T.J."/>
        </authorList>
    </citation>
    <scope>IDENTIFICATION</scope>
    <scope>FUNCTION</scope>
</reference>
<reference key="5">
    <citation type="journal article" date="2019" name="Molecules">
        <title>Secalonic Acid-F, a Novel Mycotoxin, Represses the Progression of Hepatocellular Carcinoma via MARCH1 Regulation of the PI3K/AKT/beta-catenin Signaling Pathway.</title>
        <authorList>
            <person name="Xie L."/>
            <person name="Li M."/>
            <person name="Liu D."/>
            <person name="Wang X."/>
            <person name="Wang P."/>
            <person name="Dai H."/>
            <person name="Yang W."/>
            <person name="Liu W."/>
            <person name="Hu X."/>
            <person name="Zhao M."/>
        </authorList>
    </citation>
    <scope>BIOTECHNOLOGY</scope>
</reference>
<reference key="6">
    <citation type="journal article" date="2020" name="ACS Omega">
        <title>Discovery of a Secalonic Acid Derivative from Aspergillus aculeatus, an Endophyte of Rosa damascena Mill., Triggers Apoptosis in MDA-MB-231 Triple Negative Breast Cancer Cells.</title>
        <authorList>
            <person name="Farooq S."/>
            <person name="Qayum A."/>
            <person name="Nalli Y."/>
            <person name="Lauro G."/>
            <person name="Chini M.G."/>
            <person name="Bifulco G."/>
            <person name="Chaubey A."/>
            <person name="Singh S.K."/>
            <person name="Riyaz-Ul-Hassan S."/>
            <person name="Ali A."/>
        </authorList>
    </citation>
    <scope>BIOTECHNOLOGY</scope>
</reference>
<reference key="7">
    <citation type="journal article" date="2021" name="J. Nat. Prod.">
        <title>Heterologous biosynthesis of tetrahydroxanthone dimers: determination of key factors for selective or divergent synthesis.</title>
        <authorList>
            <person name="Wei X."/>
            <person name="Chen X."/>
            <person name="Chen L."/>
            <person name="Yan D."/>
            <person name="Wang W.G."/>
            <person name="Matsuda Y."/>
        </authorList>
    </citation>
    <scope>FUNCTION</scope>
    <scope>PATHWAY</scope>
</reference>
<evidence type="ECO:0000250" key="1">
    <source>
        <dbReference type="UniProtKB" id="P56221"/>
    </source>
</evidence>
<evidence type="ECO:0000269" key="2">
    <source>
    </source>
</evidence>
<evidence type="ECO:0000269" key="3">
    <source>
    </source>
</evidence>
<evidence type="ECO:0000269" key="4">
    <source>
    </source>
</evidence>
<evidence type="ECO:0000269" key="5">
    <source>
    </source>
</evidence>
<evidence type="ECO:0000269" key="6">
    <source>
    </source>
</evidence>
<evidence type="ECO:0000269" key="7">
    <source>
    </source>
</evidence>
<evidence type="ECO:0000303" key="8">
    <source>
    </source>
</evidence>
<evidence type="ECO:0000305" key="9"/>
<evidence type="ECO:0000305" key="10">
    <source>
    </source>
</evidence>
<feature type="chain" id="PRO_0000453442" description="Scytalone dehydratase-like protein AacuK">
    <location>
        <begin position="1"/>
        <end position="176"/>
    </location>
</feature>
<feature type="active site" evidence="1">
    <location>
        <position position="81"/>
    </location>
</feature>
<feature type="active site" evidence="1">
    <location>
        <position position="107"/>
    </location>
</feature>
<feature type="binding site" evidence="1">
    <location>
        <position position="26"/>
    </location>
    <ligand>
        <name>substrate</name>
    </ligand>
</feature>
<feature type="binding site" evidence="1">
    <location>
        <position position="46"/>
    </location>
    <ligand>
        <name>substrate</name>
    </ligand>
</feature>
<name>AACUK_ASPA1</name>